<comment type="function">
    <text evidence="1">Part of the ABC transporter complex PhnCDE involved in phosphonates import. Responsible for energy coupling to the transport system.</text>
</comment>
<comment type="catalytic activity">
    <reaction evidence="1">
        <text>phosphonate(out) + ATP + H2O = phosphonate(in) + ADP + phosphate + H(+)</text>
        <dbReference type="Rhea" id="RHEA:18065"/>
        <dbReference type="ChEBI" id="CHEBI:15377"/>
        <dbReference type="ChEBI" id="CHEBI:15378"/>
        <dbReference type="ChEBI" id="CHEBI:16215"/>
        <dbReference type="ChEBI" id="CHEBI:30616"/>
        <dbReference type="ChEBI" id="CHEBI:43474"/>
        <dbReference type="ChEBI" id="CHEBI:456216"/>
        <dbReference type="EC" id="7.3.2.2"/>
    </reaction>
</comment>
<comment type="subunit">
    <text evidence="1">The complex is composed of two ATP-binding proteins (PhnC), two transmembrane proteins (PhnE) and a solute-binding protein (PhnD).</text>
</comment>
<comment type="subcellular location">
    <subcellularLocation>
        <location evidence="1">Cell inner membrane</location>
        <topology evidence="1">Peripheral membrane protein</topology>
    </subcellularLocation>
</comment>
<comment type="similarity">
    <text evidence="1">Belongs to the ABC transporter superfamily. Phosphonates importer (TC 3.A.1.9.1) family.</text>
</comment>
<sequence length="267" mass="28664">MSLSLDGVDLVHADGQRALADIRLRLAAGERVALIGPSGAGKTSLLRVLASQWRPSAGRVELLGEEPWALSAAARQRLRARIGLVHQAPPLPPRQRVVSAVLAGRLGQWPLWKSLVSLVYPLDRAGAHDALQRLDLGDKLFQRCDQLSGGQLQRVGIARVLYQRAELILADEPVSAMDPVLAGHTLALLNREAAARGSTLLASLHAVDLALQHFPRVIGLRAGRIAFDLPAGEVDRAALDALYANEQLQAERASPAGEPAVMHIPRC</sequence>
<proteinExistence type="inferred from homology"/>
<organism>
    <name type="scientific">Pseudomonas aeruginosa (strain ATCC 15692 / DSM 22644 / CIP 104116 / JCM 14847 / LMG 12228 / 1C / PRS 101 / PAO1)</name>
    <dbReference type="NCBI Taxonomy" id="208964"/>
    <lineage>
        <taxon>Bacteria</taxon>
        <taxon>Pseudomonadati</taxon>
        <taxon>Pseudomonadota</taxon>
        <taxon>Gammaproteobacteria</taxon>
        <taxon>Pseudomonadales</taxon>
        <taxon>Pseudomonadaceae</taxon>
        <taxon>Pseudomonas</taxon>
    </lineage>
</organism>
<accession>Q9HYT0</accession>
<reference key="1">
    <citation type="journal article" date="2000" name="Nature">
        <title>Complete genome sequence of Pseudomonas aeruginosa PAO1, an opportunistic pathogen.</title>
        <authorList>
            <person name="Stover C.K."/>
            <person name="Pham X.-Q.T."/>
            <person name="Erwin A.L."/>
            <person name="Mizoguchi S.D."/>
            <person name="Warrener P."/>
            <person name="Hickey M.J."/>
            <person name="Brinkman F.S.L."/>
            <person name="Hufnagle W.O."/>
            <person name="Kowalik D.J."/>
            <person name="Lagrou M."/>
            <person name="Garber R.L."/>
            <person name="Goltry L."/>
            <person name="Tolentino E."/>
            <person name="Westbrock-Wadman S."/>
            <person name="Yuan Y."/>
            <person name="Brody L.L."/>
            <person name="Coulter S.N."/>
            <person name="Folger K.R."/>
            <person name="Kas A."/>
            <person name="Larbig K."/>
            <person name="Lim R.M."/>
            <person name="Smith K.A."/>
            <person name="Spencer D.H."/>
            <person name="Wong G.K.-S."/>
            <person name="Wu Z."/>
            <person name="Paulsen I.T."/>
            <person name="Reizer J."/>
            <person name="Saier M.H. Jr."/>
            <person name="Hancock R.E.W."/>
            <person name="Lory S."/>
            <person name="Olson M.V."/>
        </authorList>
    </citation>
    <scope>NUCLEOTIDE SEQUENCE [LARGE SCALE GENOMIC DNA]</scope>
    <source>
        <strain>ATCC 15692 / DSM 22644 / CIP 104116 / JCM 14847 / LMG 12228 / 1C / PRS 101 / PAO1</strain>
    </source>
</reference>
<feature type="chain" id="PRO_0000092718" description="Phosphonates import ATP-binding protein PhnC 1">
    <location>
        <begin position="1"/>
        <end position="267"/>
    </location>
</feature>
<feature type="domain" description="ABC transporter" evidence="1">
    <location>
        <begin position="3"/>
        <end position="247"/>
    </location>
</feature>
<feature type="binding site" evidence="1">
    <location>
        <begin position="36"/>
        <end position="43"/>
    </location>
    <ligand>
        <name>ATP</name>
        <dbReference type="ChEBI" id="CHEBI:30616"/>
    </ligand>
</feature>
<protein>
    <recommendedName>
        <fullName evidence="1">Phosphonates import ATP-binding protein PhnC 1</fullName>
        <ecNumber evidence="1">7.3.2.2</ecNumber>
    </recommendedName>
</protein>
<gene>
    <name evidence="1" type="primary">phnC1</name>
    <name type="ordered locus">PA3314</name>
</gene>
<keyword id="KW-0067">ATP-binding</keyword>
<keyword id="KW-0997">Cell inner membrane</keyword>
<keyword id="KW-1003">Cell membrane</keyword>
<keyword id="KW-0472">Membrane</keyword>
<keyword id="KW-0547">Nucleotide-binding</keyword>
<keyword id="KW-0918">Phosphonate transport</keyword>
<keyword id="KW-1185">Reference proteome</keyword>
<keyword id="KW-1278">Translocase</keyword>
<keyword id="KW-0813">Transport</keyword>
<name>PHNC1_PSEAE</name>
<evidence type="ECO:0000255" key="1">
    <source>
        <dbReference type="HAMAP-Rule" id="MF_01713"/>
    </source>
</evidence>
<dbReference type="EC" id="7.3.2.2" evidence="1"/>
<dbReference type="EMBL" id="AE004091">
    <property type="protein sequence ID" value="AAG06702.1"/>
    <property type="molecule type" value="Genomic_DNA"/>
</dbReference>
<dbReference type="PIR" id="E83232">
    <property type="entry name" value="E83232"/>
</dbReference>
<dbReference type="RefSeq" id="NP_252004.1">
    <property type="nucleotide sequence ID" value="NC_002516.2"/>
</dbReference>
<dbReference type="RefSeq" id="WP_003113154.1">
    <property type="nucleotide sequence ID" value="NZ_QZGE01000017.1"/>
</dbReference>
<dbReference type="SMR" id="Q9HYT0"/>
<dbReference type="STRING" id="208964.PA3314"/>
<dbReference type="PaxDb" id="208964-PA3314"/>
<dbReference type="GeneID" id="882479"/>
<dbReference type="KEGG" id="pae:PA3314"/>
<dbReference type="PATRIC" id="fig|208964.12.peg.3471"/>
<dbReference type="PseudoCAP" id="PA3314"/>
<dbReference type="HOGENOM" id="CLU_000604_1_22_6"/>
<dbReference type="InParanoid" id="Q9HYT0"/>
<dbReference type="OrthoDB" id="9802264at2"/>
<dbReference type="PhylomeDB" id="Q9HYT0"/>
<dbReference type="BioCyc" id="PAER208964:G1FZ6-3378-MONOMER"/>
<dbReference type="Proteomes" id="UP000002438">
    <property type="component" value="Chromosome"/>
</dbReference>
<dbReference type="GO" id="GO:0005886">
    <property type="term" value="C:plasma membrane"/>
    <property type="evidence" value="ECO:0007669"/>
    <property type="project" value="UniProtKB-SubCell"/>
</dbReference>
<dbReference type="GO" id="GO:0015416">
    <property type="term" value="F:ABC-type phosphonate transporter activity"/>
    <property type="evidence" value="ECO:0007669"/>
    <property type="project" value="UniProtKB-EC"/>
</dbReference>
<dbReference type="GO" id="GO:0005524">
    <property type="term" value="F:ATP binding"/>
    <property type="evidence" value="ECO:0007669"/>
    <property type="project" value="UniProtKB-KW"/>
</dbReference>
<dbReference type="GO" id="GO:0016887">
    <property type="term" value="F:ATP hydrolysis activity"/>
    <property type="evidence" value="ECO:0007669"/>
    <property type="project" value="InterPro"/>
</dbReference>
<dbReference type="Gene3D" id="3.40.50.300">
    <property type="entry name" value="P-loop containing nucleotide triphosphate hydrolases"/>
    <property type="match status" value="1"/>
</dbReference>
<dbReference type="InterPro" id="IPR003593">
    <property type="entry name" value="AAA+_ATPase"/>
</dbReference>
<dbReference type="InterPro" id="IPR003439">
    <property type="entry name" value="ABC_transporter-like_ATP-bd"/>
</dbReference>
<dbReference type="InterPro" id="IPR017871">
    <property type="entry name" value="ABC_transporter-like_CS"/>
</dbReference>
<dbReference type="InterPro" id="IPR050086">
    <property type="entry name" value="MetN_ABC_transporter-like"/>
</dbReference>
<dbReference type="InterPro" id="IPR027417">
    <property type="entry name" value="P-loop_NTPase"/>
</dbReference>
<dbReference type="PANTHER" id="PTHR43166">
    <property type="entry name" value="AMINO ACID IMPORT ATP-BINDING PROTEIN"/>
    <property type="match status" value="1"/>
</dbReference>
<dbReference type="PANTHER" id="PTHR43166:SF6">
    <property type="entry name" value="PHOSPHONATES IMPORT ATP-BINDING PROTEIN PHNC"/>
    <property type="match status" value="1"/>
</dbReference>
<dbReference type="Pfam" id="PF00005">
    <property type="entry name" value="ABC_tran"/>
    <property type="match status" value="1"/>
</dbReference>
<dbReference type="SMART" id="SM00382">
    <property type="entry name" value="AAA"/>
    <property type="match status" value="1"/>
</dbReference>
<dbReference type="SUPFAM" id="SSF52540">
    <property type="entry name" value="P-loop containing nucleoside triphosphate hydrolases"/>
    <property type="match status" value="1"/>
</dbReference>
<dbReference type="PROSITE" id="PS00211">
    <property type="entry name" value="ABC_TRANSPORTER_1"/>
    <property type="match status" value="1"/>
</dbReference>
<dbReference type="PROSITE" id="PS50893">
    <property type="entry name" value="ABC_TRANSPORTER_2"/>
    <property type="match status" value="1"/>
</dbReference>
<dbReference type="PROSITE" id="PS51249">
    <property type="entry name" value="PHNC"/>
    <property type="match status" value="1"/>
</dbReference>